<name>DNAA_LACCB</name>
<gene>
    <name evidence="1" type="primary">dnaA</name>
    <name type="ordered locus">LCABL_00010</name>
</gene>
<reference key="1">
    <citation type="submission" date="2008-06" db="EMBL/GenBank/DDBJ databases">
        <title>Lactobacillus casei BL23 complete genome sequence.</title>
        <authorList>
            <person name="Maze A."/>
            <person name="Boel G."/>
            <person name="Bourand A."/>
            <person name="Loux V."/>
            <person name="Gibrat J.F."/>
            <person name="Zuniga M."/>
            <person name="Hartke A."/>
            <person name="Deutscher J."/>
        </authorList>
    </citation>
    <scope>NUCLEOTIDE SEQUENCE [LARGE SCALE GENOMIC DNA]</scope>
    <source>
        <strain>BL23</strain>
    </source>
</reference>
<feature type="chain" id="PRO_1000121990" description="Chromosomal replication initiator protein DnaA">
    <location>
        <begin position="1"/>
        <end position="449"/>
    </location>
</feature>
<feature type="region of interest" description="Domain I, interacts with DnaA modulators" evidence="1">
    <location>
        <begin position="1"/>
        <end position="72"/>
    </location>
</feature>
<feature type="region of interest" description="Domain II" evidence="1">
    <location>
        <begin position="72"/>
        <end position="109"/>
    </location>
</feature>
<feature type="region of interest" description="Domain III, AAA+ region" evidence="1">
    <location>
        <begin position="110"/>
        <end position="326"/>
    </location>
</feature>
<feature type="region of interest" description="Domain IV, binds dsDNA" evidence="1">
    <location>
        <begin position="327"/>
        <end position="449"/>
    </location>
</feature>
<feature type="binding site" evidence="1">
    <location>
        <position position="154"/>
    </location>
    <ligand>
        <name>ATP</name>
        <dbReference type="ChEBI" id="CHEBI:30616"/>
    </ligand>
</feature>
<feature type="binding site" evidence="1">
    <location>
        <position position="156"/>
    </location>
    <ligand>
        <name>ATP</name>
        <dbReference type="ChEBI" id="CHEBI:30616"/>
    </ligand>
</feature>
<feature type="binding site" evidence="1">
    <location>
        <position position="157"/>
    </location>
    <ligand>
        <name>ATP</name>
        <dbReference type="ChEBI" id="CHEBI:30616"/>
    </ligand>
</feature>
<feature type="binding site" evidence="1">
    <location>
        <position position="158"/>
    </location>
    <ligand>
        <name>ATP</name>
        <dbReference type="ChEBI" id="CHEBI:30616"/>
    </ligand>
</feature>
<sequence>MPNLEELWAYLNDKFREELTPVGYSTWIQTAKPVKLTKDKLEIEVPASLHKAYWEKNLVTKVVEGVYEFAQLEVDPVIMTKDELQPAPATDQRPAVEEDDQNLTFKAKTHLNPKYTFDRFVIGKGNQMAHAAALAVAEAPGTTYNPLFIYGGVGLGKTHLMQAIGNLVLDNNPAANIKYVTSENFANDFINSIQTKQQEQFRQEYRNVDLLLVDDIQFFGDKEATQEEFFHTFNTLYENMKQIVLTSDRLPNEIPKLQERLVSRFNKGLSVDVTPPDLETRIAILRNKADAEDLSIPDDTLSYIAGQIESNVRDLEGALVRVQAFSTMKNEDITTSLAADALKALKLDDRSGQLTIPQILNAVAKYFQLTVQDLKGKKRVKQIVIPRQIAMYLAREMTDNSLPKIGQEIGGKDHTTVIHAHEKIMASMTTDENLKAQVIELRNILKNRG</sequence>
<organism>
    <name type="scientific">Lacticaseibacillus casei (strain BL23)</name>
    <name type="common">Lactobacillus casei</name>
    <dbReference type="NCBI Taxonomy" id="543734"/>
    <lineage>
        <taxon>Bacteria</taxon>
        <taxon>Bacillati</taxon>
        <taxon>Bacillota</taxon>
        <taxon>Bacilli</taxon>
        <taxon>Lactobacillales</taxon>
        <taxon>Lactobacillaceae</taxon>
        <taxon>Lacticaseibacillus</taxon>
    </lineage>
</organism>
<evidence type="ECO:0000255" key="1">
    <source>
        <dbReference type="HAMAP-Rule" id="MF_00377"/>
    </source>
</evidence>
<protein>
    <recommendedName>
        <fullName evidence="1">Chromosomal replication initiator protein DnaA</fullName>
    </recommendedName>
</protein>
<dbReference type="EMBL" id="FM177140">
    <property type="protein sequence ID" value="CAQ65133.1"/>
    <property type="molecule type" value="Genomic_DNA"/>
</dbReference>
<dbReference type="SMR" id="B3W6N4"/>
<dbReference type="KEGG" id="lcb:LCABL_00010"/>
<dbReference type="HOGENOM" id="CLU_026910_3_1_9"/>
<dbReference type="GO" id="GO:0005737">
    <property type="term" value="C:cytoplasm"/>
    <property type="evidence" value="ECO:0007669"/>
    <property type="project" value="UniProtKB-SubCell"/>
</dbReference>
<dbReference type="GO" id="GO:0005886">
    <property type="term" value="C:plasma membrane"/>
    <property type="evidence" value="ECO:0007669"/>
    <property type="project" value="TreeGrafter"/>
</dbReference>
<dbReference type="GO" id="GO:0005524">
    <property type="term" value="F:ATP binding"/>
    <property type="evidence" value="ECO:0007669"/>
    <property type="project" value="UniProtKB-UniRule"/>
</dbReference>
<dbReference type="GO" id="GO:0016887">
    <property type="term" value="F:ATP hydrolysis activity"/>
    <property type="evidence" value="ECO:0007669"/>
    <property type="project" value="InterPro"/>
</dbReference>
<dbReference type="GO" id="GO:0003688">
    <property type="term" value="F:DNA replication origin binding"/>
    <property type="evidence" value="ECO:0007669"/>
    <property type="project" value="UniProtKB-UniRule"/>
</dbReference>
<dbReference type="GO" id="GO:0008289">
    <property type="term" value="F:lipid binding"/>
    <property type="evidence" value="ECO:0007669"/>
    <property type="project" value="UniProtKB-KW"/>
</dbReference>
<dbReference type="GO" id="GO:0006270">
    <property type="term" value="P:DNA replication initiation"/>
    <property type="evidence" value="ECO:0007669"/>
    <property type="project" value="UniProtKB-UniRule"/>
</dbReference>
<dbReference type="GO" id="GO:0006275">
    <property type="term" value="P:regulation of DNA replication"/>
    <property type="evidence" value="ECO:0007669"/>
    <property type="project" value="UniProtKB-UniRule"/>
</dbReference>
<dbReference type="CDD" id="cd00009">
    <property type="entry name" value="AAA"/>
    <property type="match status" value="1"/>
</dbReference>
<dbReference type="CDD" id="cd06571">
    <property type="entry name" value="Bac_DnaA_C"/>
    <property type="match status" value="1"/>
</dbReference>
<dbReference type="FunFam" id="1.10.1750.10:FF:000002">
    <property type="entry name" value="Chromosomal replication initiator protein DnaA"/>
    <property type="match status" value="1"/>
</dbReference>
<dbReference type="FunFam" id="1.10.8.60:FF:000003">
    <property type="entry name" value="Chromosomal replication initiator protein DnaA"/>
    <property type="match status" value="1"/>
</dbReference>
<dbReference type="FunFam" id="3.40.50.300:FF:000668">
    <property type="entry name" value="Chromosomal replication initiator protein DnaA"/>
    <property type="match status" value="1"/>
</dbReference>
<dbReference type="Gene3D" id="1.10.1750.10">
    <property type="match status" value="1"/>
</dbReference>
<dbReference type="Gene3D" id="1.10.8.60">
    <property type="match status" value="1"/>
</dbReference>
<dbReference type="Gene3D" id="3.30.300.180">
    <property type="match status" value="1"/>
</dbReference>
<dbReference type="Gene3D" id="3.40.50.300">
    <property type="entry name" value="P-loop containing nucleotide triphosphate hydrolases"/>
    <property type="match status" value="1"/>
</dbReference>
<dbReference type="HAMAP" id="MF_00377">
    <property type="entry name" value="DnaA_bact"/>
    <property type="match status" value="1"/>
</dbReference>
<dbReference type="InterPro" id="IPR003593">
    <property type="entry name" value="AAA+_ATPase"/>
</dbReference>
<dbReference type="InterPro" id="IPR001957">
    <property type="entry name" value="Chromosome_initiator_DnaA"/>
</dbReference>
<dbReference type="InterPro" id="IPR020591">
    <property type="entry name" value="Chromosome_initiator_DnaA-like"/>
</dbReference>
<dbReference type="InterPro" id="IPR018312">
    <property type="entry name" value="Chromosome_initiator_DnaA_CS"/>
</dbReference>
<dbReference type="InterPro" id="IPR013159">
    <property type="entry name" value="DnaA_C"/>
</dbReference>
<dbReference type="InterPro" id="IPR013317">
    <property type="entry name" value="DnaA_dom"/>
</dbReference>
<dbReference type="InterPro" id="IPR038454">
    <property type="entry name" value="DnaA_N_sf"/>
</dbReference>
<dbReference type="InterPro" id="IPR027417">
    <property type="entry name" value="P-loop_NTPase"/>
</dbReference>
<dbReference type="InterPro" id="IPR010921">
    <property type="entry name" value="Trp_repressor/repl_initiator"/>
</dbReference>
<dbReference type="NCBIfam" id="TIGR00362">
    <property type="entry name" value="DnaA"/>
    <property type="match status" value="1"/>
</dbReference>
<dbReference type="PANTHER" id="PTHR30050">
    <property type="entry name" value="CHROMOSOMAL REPLICATION INITIATOR PROTEIN DNAA"/>
    <property type="match status" value="1"/>
</dbReference>
<dbReference type="PANTHER" id="PTHR30050:SF2">
    <property type="entry name" value="CHROMOSOMAL REPLICATION INITIATOR PROTEIN DNAA"/>
    <property type="match status" value="1"/>
</dbReference>
<dbReference type="Pfam" id="PF00308">
    <property type="entry name" value="Bac_DnaA"/>
    <property type="match status" value="1"/>
</dbReference>
<dbReference type="Pfam" id="PF08299">
    <property type="entry name" value="Bac_DnaA_C"/>
    <property type="match status" value="1"/>
</dbReference>
<dbReference type="PRINTS" id="PR00051">
    <property type="entry name" value="DNAA"/>
</dbReference>
<dbReference type="SMART" id="SM00382">
    <property type="entry name" value="AAA"/>
    <property type="match status" value="1"/>
</dbReference>
<dbReference type="SMART" id="SM00760">
    <property type="entry name" value="Bac_DnaA_C"/>
    <property type="match status" value="1"/>
</dbReference>
<dbReference type="SUPFAM" id="SSF52540">
    <property type="entry name" value="P-loop containing nucleoside triphosphate hydrolases"/>
    <property type="match status" value="1"/>
</dbReference>
<dbReference type="SUPFAM" id="SSF48295">
    <property type="entry name" value="TrpR-like"/>
    <property type="match status" value="1"/>
</dbReference>
<dbReference type="PROSITE" id="PS01008">
    <property type="entry name" value="DNAA"/>
    <property type="match status" value="1"/>
</dbReference>
<comment type="function">
    <text evidence="1">Plays an essential role in the initiation and regulation of chromosomal replication. ATP-DnaA binds to the origin of replication (oriC) to initiate formation of the DNA replication initiation complex once per cell cycle. Binds the DnaA box (a 9 base pair repeat at the origin) and separates the double-stranded (ds)DNA. Forms a right-handed helical filament on oriC DNA; dsDNA binds to the exterior of the filament while single-stranded (ss)DNA is stabiized in the filament's interior. The ATP-DnaA-oriC complex binds and stabilizes one strand of the AT-rich DNA unwinding element (DUE), permitting loading of DNA polymerase. After initiation quickly degrades to an ADP-DnaA complex that is not apt for DNA replication. Binds acidic phospholipids.</text>
</comment>
<comment type="subunit">
    <text evidence="1">Oligomerizes as a right-handed, spiral filament on DNA at oriC.</text>
</comment>
<comment type="subcellular location">
    <subcellularLocation>
        <location evidence="1">Cytoplasm</location>
    </subcellularLocation>
</comment>
<comment type="domain">
    <text evidence="1">Domain I is involved in oligomerization and binding regulators, domain II is flexibile and of varying length in different bacteria, domain III forms the AAA+ region, while domain IV binds dsDNA.</text>
</comment>
<comment type="similarity">
    <text evidence="1">Belongs to the DnaA family.</text>
</comment>
<keyword id="KW-0067">ATP-binding</keyword>
<keyword id="KW-0963">Cytoplasm</keyword>
<keyword id="KW-0235">DNA replication</keyword>
<keyword id="KW-0238">DNA-binding</keyword>
<keyword id="KW-0446">Lipid-binding</keyword>
<keyword id="KW-0547">Nucleotide-binding</keyword>
<accession>B3W6N4</accession>
<proteinExistence type="inferred from homology"/>